<sequence length="723" mass="79149">MAAPSLLNWRRVSSFTGPVPRARHGHRAVAIRELMIIFGGGNEGIADELHVYNTVTNQWFLPAVRGDIPPGCAAHGFVCDGTRILVFGGMVEYGRYSNELYELQASRWLWKKVKPQPPPSGLPPCPRLGHSFSLYGNKCYLFAGLANESEDSNNNVPRYLNDFYELELQHGSGVVGWSVPATKGTVPSPRESHTAVIYCKRDSGSPKMYVFGGMCGARLDDLWQLDLETMSWSKPETKGTVPLPRSLHTASVIGNKMYIFGGWVPHKGENTENSPHDCEWRCTSSFSYLNLDTAEWTTLVSDSQEDKKNSRPRPRAGHCAVAIGTRLYFWSGRDGYKKALNSQVCCKDLWYLDTEKPPAPSQVQLIKATTNSFHVKWDEVPTVEGYLLQLNTDLTHQAASPDASAAPNTLGGRTDPHRQGSNSILHNSVSDPANCTKPEHTAVAARGMSLKSKPDSRAADSSVALHSPLAPNTSNNNSCMADMLWKSEVDEICALPATKISRVEAHAAATPFSKETPSNPVAILKAEQWCDVGIFKNNTALVSQFYLLPKGKQSMSKVGNADVPDYSLLKKQDLVPGTVYKFRVAAINGCGIGPFSKLSEFKTCIPGFPGAPSTVRISKNVEGIHLSWEPPTSPSGNILEYSAYLAIRTAQVQDNPSQLVFMRIYCGLKTSCIVTAGQLANAHIDYTSRPAIVFRISAKNEKGYGPATQVRWLQGNSKKAPLS</sequence>
<feature type="chain" id="PRO_0000119074" description="Host cell factor 2">
    <location>
        <begin position="1"/>
        <end position="723"/>
    </location>
</feature>
<feature type="repeat" description="Kelch 1">
    <location>
        <begin position="34"/>
        <end position="79"/>
    </location>
</feature>
<feature type="repeat" description="Kelch 2">
    <location>
        <begin position="83"/>
        <end position="130"/>
    </location>
</feature>
<feature type="repeat" description="Kelch 3">
    <location>
        <begin position="207"/>
        <end position="255"/>
    </location>
</feature>
<feature type="repeat" description="Kelch 4">
    <location>
        <begin position="257"/>
        <end position="305"/>
    </location>
</feature>
<feature type="domain" description="Fibronectin type-III 1" evidence="3">
    <location>
        <begin position="357"/>
        <end position="436"/>
    </location>
</feature>
<feature type="domain" description="Fibronectin type-III 2" evidence="3">
    <location>
        <begin position="516"/>
        <end position="606"/>
    </location>
</feature>
<feature type="domain" description="Fibronectin type-III 3" evidence="3">
    <location>
        <begin position="608"/>
        <end position="720"/>
    </location>
</feature>
<feature type="region of interest" description="Disordered" evidence="4">
    <location>
        <begin position="398"/>
        <end position="472"/>
    </location>
</feature>
<feature type="compositionally biased region" description="Polar residues" evidence="4">
    <location>
        <begin position="419"/>
        <end position="433"/>
    </location>
</feature>
<comment type="subunit">
    <text evidence="1 2">Binds KMT2A/MLL1. Component of the MLL1/MLL complex, at least composed of KMT2A/MLL1, ASH2L, RBBP5, DPY30, WDR5, MEN1, HCFC1 and HCFC2 (By similarity). Interacts with TASOR (By similarity).</text>
</comment>
<comment type="subcellular location">
    <subcellularLocation>
        <location evidence="2">Cytoplasm</location>
    </subcellularLocation>
    <subcellularLocation>
        <location evidence="2">Nucleus</location>
    </subcellularLocation>
</comment>
<name>HCFC2_RAT</name>
<protein>
    <recommendedName>
        <fullName>Host cell factor 2</fullName>
        <shortName>HCF-2</shortName>
    </recommendedName>
    <alternativeName>
        <fullName>C2 factor</fullName>
    </alternativeName>
</protein>
<dbReference type="EMBL" id="BC085951">
    <property type="protein sequence ID" value="AAH85951.1"/>
    <property type="molecule type" value="mRNA"/>
</dbReference>
<dbReference type="RefSeq" id="NP_001008358.1">
    <property type="nucleotide sequence ID" value="NM_001008357.1"/>
</dbReference>
<dbReference type="SMR" id="Q5RKG2"/>
<dbReference type="FunCoup" id="Q5RKG2">
    <property type="interactions" value="2378"/>
</dbReference>
<dbReference type="STRING" id="10116.ENSRNOP00000070255"/>
<dbReference type="PhosphoSitePlus" id="Q5RKG2"/>
<dbReference type="PaxDb" id="10116-ENSRNOP00000014951"/>
<dbReference type="Ensembl" id="ENSRNOT00000086905.2">
    <property type="protein sequence ID" value="ENSRNOP00000070255.2"/>
    <property type="gene ID" value="ENSRNOG00000053510.2"/>
</dbReference>
<dbReference type="GeneID" id="314704"/>
<dbReference type="KEGG" id="rno:314704"/>
<dbReference type="UCSC" id="RGD:1307385">
    <property type="organism name" value="rat"/>
</dbReference>
<dbReference type="AGR" id="RGD:1307385"/>
<dbReference type="CTD" id="29915"/>
<dbReference type="RGD" id="1307385">
    <property type="gene designation" value="Hcfc2"/>
</dbReference>
<dbReference type="eggNOG" id="KOG4152">
    <property type="taxonomic scope" value="Eukaryota"/>
</dbReference>
<dbReference type="GeneTree" id="ENSGT00940000160733"/>
<dbReference type="InParanoid" id="Q5RKG2"/>
<dbReference type="OMA" id="VFKTLYC"/>
<dbReference type="OrthoDB" id="5122at9989"/>
<dbReference type="Reactome" id="R-RNO-9772755">
    <property type="pathway name" value="Formation of WDR5-containing histone-modifying complexes"/>
</dbReference>
<dbReference type="PRO" id="PR:Q5RKG2"/>
<dbReference type="Proteomes" id="UP000002494">
    <property type="component" value="Chromosome 7"/>
</dbReference>
<dbReference type="GO" id="GO:0005737">
    <property type="term" value="C:cytoplasm"/>
    <property type="evidence" value="ECO:0000266"/>
    <property type="project" value="RGD"/>
</dbReference>
<dbReference type="GO" id="GO:0035097">
    <property type="term" value="C:histone methyltransferase complex"/>
    <property type="evidence" value="ECO:0000318"/>
    <property type="project" value="GO_Central"/>
</dbReference>
<dbReference type="GO" id="GO:0071339">
    <property type="term" value="C:MLL1 complex"/>
    <property type="evidence" value="ECO:0000266"/>
    <property type="project" value="RGD"/>
</dbReference>
<dbReference type="GO" id="GO:0044665">
    <property type="term" value="C:MLL1/2 complex"/>
    <property type="evidence" value="ECO:0000266"/>
    <property type="project" value="RGD"/>
</dbReference>
<dbReference type="GO" id="GO:0005634">
    <property type="term" value="C:nucleus"/>
    <property type="evidence" value="ECO:0000266"/>
    <property type="project" value="RGD"/>
</dbReference>
<dbReference type="GO" id="GO:0048188">
    <property type="term" value="C:Set1C/COMPASS complex"/>
    <property type="evidence" value="ECO:0000266"/>
    <property type="project" value="RGD"/>
</dbReference>
<dbReference type="GO" id="GO:0003713">
    <property type="term" value="F:transcription coactivator activity"/>
    <property type="evidence" value="ECO:0000318"/>
    <property type="project" value="GO_Central"/>
</dbReference>
<dbReference type="GO" id="GO:0003712">
    <property type="term" value="F:transcription coregulator activity"/>
    <property type="evidence" value="ECO:0000266"/>
    <property type="project" value="RGD"/>
</dbReference>
<dbReference type="GO" id="GO:0140374">
    <property type="term" value="P:antiviral innate immune response"/>
    <property type="evidence" value="ECO:0000266"/>
    <property type="project" value="RGD"/>
</dbReference>
<dbReference type="GO" id="GO:0006338">
    <property type="term" value="P:chromatin remodeling"/>
    <property type="evidence" value="ECO:0000318"/>
    <property type="project" value="GO_Central"/>
</dbReference>
<dbReference type="GO" id="GO:1902615">
    <property type="term" value="P:immune response involved in response to exogenous dsRNA"/>
    <property type="evidence" value="ECO:0000266"/>
    <property type="project" value="RGD"/>
</dbReference>
<dbReference type="GO" id="GO:0000122">
    <property type="term" value="P:negative regulation of transcription by RNA polymerase II"/>
    <property type="evidence" value="ECO:0000315"/>
    <property type="project" value="UniProtKB"/>
</dbReference>
<dbReference type="GO" id="GO:0006355">
    <property type="term" value="P:regulation of DNA-templated transcription"/>
    <property type="evidence" value="ECO:0000318"/>
    <property type="project" value="GO_Central"/>
</dbReference>
<dbReference type="GO" id="GO:0034139">
    <property type="term" value="P:regulation of toll-like receptor 3 signaling pathway"/>
    <property type="evidence" value="ECO:0000266"/>
    <property type="project" value="RGD"/>
</dbReference>
<dbReference type="GO" id="GO:0006357">
    <property type="term" value="P:regulation of transcription by RNA polymerase II"/>
    <property type="evidence" value="ECO:0000266"/>
    <property type="project" value="RGD"/>
</dbReference>
<dbReference type="CDD" id="cd00063">
    <property type="entry name" value="FN3"/>
    <property type="match status" value="2"/>
</dbReference>
<dbReference type="FunFam" id="2.60.40.10:FF:000443">
    <property type="entry name" value="host cell factor 1"/>
    <property type="match status" value="1"/>
</dbReference>
<dbReference type="FunFam" id="2.60.40.10:FF:000259">
    <property type="entry name" value="Host cell factor 1 (Predicted)"/>
    <property type="match status" value="1"/>
</dbReference>
<dbReference type="FunFam" id="2.120.10.80:FF:000085">
    <property type="entry name" value="host cell factor 1 isoform X4"/>
    <property type="match status" value="1"/>
</dbReference>
<dbReference type="Gene3D" id="6.10.250.2590">
    <property type="match status" value="1"/>
</dbReference>
<dbReference type="Gene3D" id="2.60.40.10">
    <property type="entry name" value="Immunoglobulins"/>
    <property type="match status" value="2"/>
</dbReference>
<dbReference type="Gene3D" id="2.120.10.80">
    <property type="entry name" value="Kelch-type beta propeller"/>
    <property type="match status" value="1"/>
</dbReference>
<dbReference type="InterPro" id="IPR003961">
    <property type="entry name" value="FN3_dom"/>
</dbReference>
<dbReference type="InterPro" id="IPR036116">
    <property type="entry name" value="FN3_sf"/>
</dbReference>
<dbReference type="InterPro" id="IPR043536">
    <property type="entry name" value="HCF1/2"/>
</dbReference>
<dbReference type="InterPro" id="IPR013783">
    <property type="entry name" value="Ig-like_fold"/>
</dbReference>
<dbReference type="InterPro" id="IPR015915">
    <property type="entry name" value="Kelch-typ_b-propeller"/>
</dbReference>
<dbReference type="PANTHER" id="PTHR46003">
    <property type="entry name" value="HOST CELL FACTOR"/>
    <property type="match status" value="1"/>
</dbReference>
<dbReference type="PANTHER" id="PTHR46003:SF2">
    <property type="entry name" value="HOST CELL FACTOR 2"/>
    <property type="match status" value="1"/>
</dbReference>
<dbReference type="Pfam" id="PF13854">
    <property type="entry name" value="Kelch_HCF"/>
    <property type="match status" value="1"/>
</dbReference>
<dbReference type="SMART" id="SM00060">
    <property type="entry name" value="FN3"/>
    <property type="match status" value="2"/>
</dbReference>
<dbReference type="SUPFAM" id="SSF49265">
    <property type="entry name" value="Fibronectin type III"/>
    <property type="match status" value="1"/>
</dbReference>
<dbReference type="SUPFAM" id="SSF117281">
    <property type="entry name" value="Kelch motif"/>
    <property type="match status" value="1"/>
</dbReference>
<dbReference type="PROSITE" id="PS50853">
    <property type="entry name" value="FN3"/>
    <property type="match status" value="2"/>
</dbReference>
<reference key="1">
    <citation type="journal article" date="2004" name="Genome Res.">
        <title>The status, quality, and expansion of the NIH full-length cDNA project: the Mammalian Gene Collection (MGC).</title>
        <authorList>
            <consortium name="The MGC Project Team"/>
        </authorList>
    </citation>
    <scope>NUCLEOTIDE SEQUENCE [LARGE SCALE MRNA]</scope>
    <source>
        <tissue>Testis</tissue>
    </source>
</reference>
<gene>
    <name type="primary">Hcfc2</name>
</gene>
<organism>
    <name type="scientific">Rattus norvegicus</name>
    <name type="common">Rat</name>
    <dbReference type="NCBI Taxonomy" id="10116"/>
    <lineage>
        <taxon>Eukaryota</taxon>
        <taxon>Metazoa</taxon>
        <taxon>Chordata</taxon>
        <taxon>Craniata</taxon>
        <taxon>Vertebrata</taxon>
        <taxon>Euteleostomi</taxon>
        <taxon>Mammalia</taxon>
        <taxon>Eutheria</taxon>
        <taxon>Euarchontoglires</taxon>
        <taxon>Glires</taxon>
        <taxon>Rodentia</taxon>
        <taxon>Myomorpha</taxon>
        <taxon>Muroidea</taxon>
        <taxon>Muridae</taxon>
        <taxon>Murinae</taxon>
        <taxon>Rattus</taxon>
    </lineage>
</organism>
<keyword id="KW-0963">Cytoplasm</keyword>
<keyword id="KW-0880">Kelch repeat</keyword>
<keyword id="KW-0539">Nucleus</keyword>
<keyword id="KW-1185">Reference proteome</keyword>
<keyword id="KW-0677">Repeat</keyword>
<proteinExistence type="evidence at transcript level"/>
<accession>Q5RKG2</accession>
<evidence type="ECO:0000250" key="1">
    <source>
        <dbReference type="UniProtKB" id="Q9D968"/>
    </source>
</evidence>
<evidence type="ECO:0000250" key="2">
    <source>
        <dbReference type="UniProtKB" id="Q9Y5Z7"/>
    </source>
</evidence>
<evidence type="ECO:0000255" key="3">
    <source>
        <dbReference type="PROSITE-ProRule" id="PRU00316"/>
    </source>
</evidence>
<evidence type="ECO:0000256" key="4">
    <source>
        <dbReference type="SAM" id="MobiDB-lite"/>
    </source>
</evidence>